<keyword id="KW-0017">Alkaloid metabolism</keyword>
<keyword id="KW-0489">Methyltransferase</keyword>
<keyword id="KW-0949">S-adenosyl-L-methionine</keyword>
<keyword id="KW-0808">Transferase</keyword>
<protein>
    <recommendedName>
        <fullName evidence="5">3'-hydroxy-N-methyl-(S)-coclaurine 4'-O-methyltransferase 1</fullName>
        <shortName evidence="6">4'-OMT1</shortName>
        <shortName evidence="5">Ps4'OMT1</shortName>
        <ecNumber evidence="6">2.1.1.116</ecNumber>
    </recommendedName>
    <alternativeName>
        <fullName evidence="6">S-adenosyl-L-methionine:3'-hydroxy-N-methylcoclaurine 4'-O-methyltransferase</fullName>
    </alternativeName>
</protein>
<organism evidence="7">
    <name type="scientific">Papaver somniferum</name>
    <name type="common">Opium poppy</name>
    <dbReference type="NCBI Taxonomy" id="3469"/>
    <lineage>
        <taxon>Eukaryota</taxon>
        <taxon>Viridiplantae</taxon>
        <taxon>Streptophyta</taxon>
        <taxon>Embryophyta</taxon>
        <taxon>Tracheophyta</taxon>
        <taxon>Spermatophyta</taxon>
        <taxon>Magnoliopsida</taxon>
        <taxon>Ranunculales</taxon>
        <taxon>Papaveraceae</taxon>
        <taxon>Papaveroideae</taxon>
        <taxon>Papaver</taxon>
    </lineage>
</organism>
<comment type="function">
    <text evidence="4 6">Involved in the biosynthesis of benzylisoquinoline alkaloids. Catalyzes the transfer of the methyl group to the 4'-hydroxyl group of 3'-hydroxy-N-methylcoclaurine to form reticuline. Also involved in the papaverine biosynthesis.</text>
</comment>
<comment type="catalytic activity">
    <reaction evidence="6">
        <text>(S)-3'-hydroxy-N-methylcoclaurine + S-adenosyl-L-methionine = (S)-reticuline + S-adenosyl-L-homocysteine + H(+)</text>
        <dbReference type="Rhea" id="RHEA:17789"/>
        <dbReference type="ChEBI" id="CHEBI:15378"/>
        <dbReference type="ChEBI" id="CHEBI:57856"/>
        <dbReference type="ChEBI" id="CHEBI:57873"/>
        <dbReference type="ChEBI" id="CHEBI:58010"/>
        <dbReference type="ChEBI" id="CHEBI:59789"/>
        <dbReference type="EC" id="2.1.1.116"/>
    </reaction>
</comment>
<comment type="pathway">
    <text>Alkaloid biosynthesis; (S)-reticuline biosynthesis; (S)-reticuline from (S)-norcoclaurine: step 4/4.</text>
</comment>
<comment type="tissue specificity">
    <text evidence="2 3">Expressed in roots, stems, leaves and flowers (PubMed:12946416, PubMed:16813579). Restricted to sieve elements of the phloem adjacent or proximal to laticifers (PubMed:16813579).</text>
</comment>
<comment type="developmental stage">
    <text evidence="2 3">Transiently induced from 4 to 7 days after seed imbibition.</text>
</comment>
<comment type="induction">
    <text evidence="2">Up-regulated upon fungal elicitor treatment or wounding.</text>
</comment>
<comment type="similarity">
    <text evidence="6">Belongs to the class I-like SAM-binding methyltransferase superfamily. Cation-independent O-methyltransferase family. COMT subfamily.</text>
</comment>
<reference key="1">
    <citation type="journal article" date="2003" name="Phytochemistry">
        <title>Developmental and inducible accumulation of gene transcripts involved in alkaloid biosynthesis in opium poppy.</title>
        <authorList>
            <person name="Facchini P.J."/>
            <person name="Park S.U."/>
        </authorList>
    </citation>
    <scope>NUCLEOTIDE SEQUENCE [MRNA]</scope>
    <scope>NOMENCLATURE</scope>
    <scope>TISSUE SPECIFICITY</scope>
    <scope>DEVELOPMENTAL STAGE</scope>
    <scope>INDUCTION BY ELICITOR AND WOUNDING</scope>
    <source>
        <strain>cv. Marianne</strain>
    </source>
</reference>
<reference key="2">
    <citation type="journal article" date="2006" name="Plant J.">
        <title>The role of phloem sieve elements and laticifers in the biosynthesis and accumulation of alkaloids in opium poppy.</title>
        <authorList>
            <person name="Samanani N."/>
            <person name="Alcantara J."/>
            <person name="Bourgault R."/>
            <person name="Zulak K.G."/>
            <person name="Facchini P.J."/>
        </authorList>
    </citation>
    <scope>NUCLEOTIDE SEQUENCE [MRNA]</scope>
    <scope>TISSUE SPECIFICITY</scope>
    <scope>DEVELOPMENTAL STAGE</scope>
    <source>
        <strain>cv. Marianne</strain>
    </source>
</reference>
<reference key="3">
    <citation type="journal article" date="2013" name="PLoS ONE">
        <title>Comparative transcriptome analysis using high papaverine mutant of Papaver somniferum reveals pathway and uncharacterized steps of papaverine biosynthesis.</title>
        <authorList>
            <person name="Pathak S."/>
            <person name="Lakhwani D."/>
            <person name="Gupta P."/>
            <person name="Mishra B.K."/>
            <person name="Shukla S."/>
            <person name="Asif M.H."/>
            <person name="Trivedi P.K."/>
        </authorList>
    </citation>
    <scope>FUNCTION</scope>
</reference>
<evidence type="ECO:0000255" key="1">
    <source>
        <dbReference type="PROSITE-ProRule" id="PRU01020"/>
    </source>
</evidence>
<evidence type="ECO:0000269" key="2">
    <source>
    </source>
</evidence>
<evidence type="ECO:0000269" key="3">
    <source>
    </source>
</evidence>
<evidence type="ECO:0000269" key="4">
    <source>
    </source>
</evidence>
<evidence type="ECO:0000303" key="5">
    <source>
    </source>
</evidence>
<evidence type="ECO:0000305" key="6"/>
<evidence type="ECO:0000312" key="7">
    <source>
        <dbReference type="EMBL" id="AAP45313.1"/>
    </source>
</evidence>
<proteinExistence type="evidence at transcript level"/>
<dbReference type="EC" id="2.1.1.116" evidence="6"/>
<dbReference type="EMBL" id="AY217333">
    <property type="protein sequence ID" value="AAP45313.1"/>
    <property type="molecule type" value="mRNA"/>
</dbReference>
<dbReference type="SMR" id="Q7XB11"/>
<dbReference type="OrthoDB" id="1606438at2759"/>
<dbReference type="BioCyc" id="MetaCyc:MONOMER-18209"/>
<dbReference type="BRENDA" id="2.1.1.116">
    <property type="organism ID" value="4515"/>
</dbReference>
<dbReference type="UniPathway" id="UPA00306">
    <property type="reaction ID" value="UER00444"/>
</dbReference>
<dbReference type="PRO" id="PR:Q7XB11"/>
<dbReference type="GO" id="GO:0030784">
    <property type="term" value="F:3'-hydroxy-N-methyl-(S)-coclaurine 4'-O-methyltransferase activity"/>
    <property type="evidence" value="ECO:0007669"/>
    <property type="project" value="UniProtKB-EC"/>
</dbReference>
<dbReference type="GO" id="GO:0008171">
    <property type="term" value="F:O-methyltransferase activity"/>
    <property type="evidence" value="ECO:0007669"/>
    <property type="project" value="InterPro"/>
</dbReference>
<dbReference type="GO" id="GO:0046983">
    <property type="term" value="F:protein dimerization activity"/>
    <property type="evidence" value="ECO:0007669"/>
    <property type="project" value="InterPro"/>
</dbReference>
<dbReference type="GO" id="GO:0009820">
    <property type="term" value="P:alkaloid metabolic process"/>
    <property type="evidence" value="ECO:0007669"/>
    <property type="project" value="UniProtKB-KW"/>
</dbReference>
<dbReference type="GO" id="GO:0032259">
    <property type="term" value="P:methylation"/>
    <property type="evidence" value="ECO:0007669"/>
    <property type="project" value="UniProtKB-KW"/>
</dbReference>
<dbReference type="Gene3D" id="3.40.50.150">
    <property type="entry name" value="Vaccinia Virus protein VP39"/>
    <property type="match status" value="1"/>
</dbReference>
<dbReference type="Gene3D" id="1.10.10.10">
    <property type="entry name" value="Winged helix-like DNA-binding domain superfamily/Winged helix DNA-binding domain"/>
    <property type="match status" value="1"/>
</dbReference>
<dbReference type="InterPro" id="IPR016461">
    <property type="entry name" value="COMT-like"/>
</dbReference>
<dbReference type="InterPro" id="IPR001077">
    <property type="entry name" value="O_MeTrfase_dom"/>
</dbReference>
<dbReference type="InterPro" id="IPR012967">
    <property type="entry name" value="Plant_O-MeTrfase_dimerisation"/>
</dbReference>
<dbReference type="InterPro" id="IPR029063">
    <property type="entry name" value="SAM-dependent_MTases_sf"/>
</dbReference>
<dbReference type="InterPro" id="IPR036388">
    <property type="entry name" value="WH-like_DNA-bd_sf"/>
</dbReference>
<dbReference type="InterPro" id="IPR036390">
    <property type="entry name" value="WH_DNA-bd_sf"/>
</dbReference>
<dbReference type="PANTHER" id="PTHR11746">
    <property type="entry name" value="O-METHYLTRANSFERASE"/>
    <property type="match status" value="1"/>
</dbReference>
<dbReference type="Pfam" id="PF08100">
    <property type="entry name" value="Dimerisation"/>
    <property type="match status" value="1"/>
</dbReference>
<dbReference type="Pfam" id="PF00891">
    <property type="entry name" value="Methyltransf_2"/>
    <property type="match status" value="1"/>
</dbReference>
<dbReference type="PIRSF" id="PIRSF005739">
    <property type="entry name" value="O-mtase"/>
    <property type="match status" value="1"/>
</dbReference>
<dbReference type="SUPFAM" id="SSF53335">
    <property type="entry name" value="S-adenosyl-L-methionine-dependent methyltransferases"/>
    <property type="match status" value="1"/>
</dbReference>
<dbReference type="SUPFAM" id="SSF46785">
    <property type="entry name" value="Winged helix' DNA-binding domain"/>
    <property type="match status" value="1"/>
</dbReference>
<dbReference type="PROSITE" id="PS51683">
    <property type="entry name" value="SAM_OMT_II"/>
    <property type="match status" value="1"/>
</dbReference>
<name>4OMT1_PAPSO</name>
<sequence length="354" mass="39402">MGSSIDAETHEVDIKDQAQLWNIIYGYADSLVLRCTVEIGIADIIKNNNGSITLSELVSKLPLSNVNSDNLYRLLRYLVHLNILGQQTCAAGVDRVYSLKPVGTLLLKDSERSMAPVILGLSQKDFLFVWNFVKEGLGTGSTTAFEKAMGMDMWKYLEVNPNQSQLFDEGQAGETRLLTKTLLVDCRDTFQGMDSLVDVGGGNGTTIKAIHEAFPHIKCTLYDLPHVIANSDDHPNILKVPGDMFMSVPSAQVLLLKCVLHDWTDEHCVNILKKCKEAIPKETGKVIIVDVALEEESEHELTKARLILDIDMLVNTGGRERTAEDWENLLKRAGFRSHKIRPIRAIQSVIEAFP</sequence>
<gene>
    <name evidence="5" type="primary">4'OMT1</name>
</gene>
<accession>Q7XB11</accession>
<feature type="chain" id="PRO_0000433984" description="3'-hydroxy-N-methyl-(S)-coclaurine 4'-O-methyltransferase 1">
    <location>
        <begin position="1"/>
        <end position="354"/>
    </location>
</feature>
<feature type="active site" description="Proton acceptor" evidence="1">
    <location>
        <position position="261"/>
    </location>
</feature>
<feature type="binding site" evidence="1">
    <location>
        <position position="223"/>
    </location>
    <ligand>
        <name>S-adenosyl-L-methionine</name>
        <dbReference type="ChEBI" id="CHEBI:59789"/>
    </ligand>
</feature>